<sequence length="645" mass="69090">MDFNREHKINFLYVLAAMVGVLLIQSLVSQPDHIRTIPYSEFQQLASQGKVTDLVVGPTRITGTLKDAPKDSPRHFSTLRVDQALAQSLTNENVTFSGEPEPGPWPTILGWLMPIVGFALVWMFLIRPMSMGPGMDGMMSIGKSKARVYVEKDIKVTFADVAGVDEAKDELKEVVSFLRDPRSYGRLGARVPKGVLLVGPPGTGKTLLARAVAGEAGVAFFSISGSEFVEMFVGVGAARVRDLFEQARKHAPAIVFIDELDSLGRARGSAFPGGGGHDEKEQTLNQLLAELDGFDTSIGVVLLAATNRPEILDPALLRAGRFDRQVLVDRPDKKGRAQILEVHLKKIALAPGVPVDDIAALTPGFSGADLANLVNEAAILATRRHAENVSLDDFTQAIERIVAGLEKRNRLLNAHEREVVAHHEMGHALVAMTLPGVDMVQKISIIPHGIAALGYTIQRPTEERFLMDRAELMNRMAVLLGGRAAERLIFADVSTGAADDLAKASAIARSMVVRFGMDPTLGQVAYEPETTSALGLPNGSEWRPRQYGEQTAAAIDAAVRELIETASACAFSILQANRGLLESAARDLLAKETMSGEELQALLSQLGGGAASASVLRDGGDGAADAGQDRSGEHRALTVEGGEAQ</sequence>
<feature type="chain" id="PRO_0000400333" description="ATP-dependent zinc metalloprotease FtsH">
    <location>
        <begin position="1"/>
        <end position="645"/>
    </location>
</feature>
<feature type="topological domain" description="Cytoplasmic" evidence="1">
    <location>
        <begin position="1"/>
        <end position="8"/>
    </location>
</feature>
<feature type="transmembrane region" description="Helical" evidence="1">
    <location>
        <begin position="9"/>
        <end position="29"/>
    </location>
</feature>
<feature type="topological domain" description="Periplasmic" evidence="1">
    <location>
        <begin position="30"/>
        <end position="105"/>
    </location>
</feature>
<feature type="transmembrane region" description="Helical" evidence="1">
    <location>
        <begin position="106"/>
        <end position="126"/>
    </location>
</feature>
<feature type="topological domain" description="Cytoplasmic" evidence="1">
    <location>
        <begin position="127"/>
        <end position="645"/>
    </location>
</feature>
<feature type="region of interest" description="Disordered" evidence="2">
    <location>
        <begin position="612"/>
        <end position="645"/>
    </location>
</feature>
<feature type="compositionally biased region" description="Basic and acidic residues" evidence="2">
    <location>
        <begin position="627"/>
        <end position="637"/>
    </location>
</feature>
<feature type="active site" evidence="1">
    <location>
        <position position="424"/>
    </location>
</feature>
<feature type="binding site" evidence="1">
    <location>
        <begin position="199"/>
        <end position="206"/>
    </location>
    <ligand>
        <name>ATP</name>
        <dbReference type="ChEBI" id="CHEBI:30616"/>
    </ligand>
</feature>
<feature type="binding site" evidence="1">
    <location>
        <position position="423"/>
    </location>
    <ligand>
        <name>Zn(2+)</name>
        <dbReference type="ChEBI" id="CHEBI:29105"/>
        <note>catalytic</note>
    </ligand>
</feature>
<feature type="binding site" evidence="1">
    <location>
        <position position="427"/>
    </location>
    <ligand>
        <name>Zn(2+)</name>
        <dbReference type="ChEBI" id="CHEBI:29105"/>
        <note>catalytic</note>
    </ligand>
</feature>
<feature type="binding site" evidence="1">
    <location>
        <position position="500"/>
    </location>
    <ligand>
        <name>Zn(2+)</name>
        <dbReference type="ChEBI" id="CHEBI:29105"/>
        <note>catalytic</note>
    </ligand>
</feature>
<evidence type="ECO:0000255" key="1">
    <source>
        <dbReference type="HAMAP-Rule" id="MF_01458"/>
    </source>
</evidence>
<evidence type="ECO:0000256" key="2">
    <source>
        <dbReference type="SAM" id="MobiDB-lite"/>
    </source>
</evidence>
<comment type="function">
    <text evidence="1">Acts as a processive, ATP-dependent zinc metallopeptidase for both cytoplasmic and membrane proteins. Plays a role in the quality control of integral membrane proteins.</text>
</comment>
<comment type="cofactor">
    <cofactor evidence="1">
        <name>Zn(2+)</name>
        <dbReference type="ChEBI" id="CHEBI:29105"/>
    </cofactor>
    <text evidence="1">Binds 1 zinc ion per subunit.</text>
</comment>
<comment type="subunit">
    <text evidence="1">Homohexamer.</text>
</comment>
<comment type="subcellular location">
    <subcellularLocation>
        <location evidence="1">Cell inner membrane</location>
        <topology evidence="1">Multi-pass membrane protein</topology>
        <orientation evidence="1">Cytoplasmic side</orientation>
    </subcellularLocation>
</comment>
<comment type="similarity">
    <text evidence="1">In the central section; belongs to the AAA ATPase family.</text>
</comment>
<comment type="similarity">
    <text evidence="1">In the C-terminal section; belongs to the peptidase M41 family.</text>
</comment>
<organism>
    <name type="scientific">Paraburkholderia phymatum (strain DSM 17167 / CIP 108236 / LMG 21445 / STM815)</name>
    <name type="common">Burkholderia phymatum</name>
    <dbReference type="NCBI Taxonomy" id="391038"/>
    <lineage>
        <taxon>Bacteria</taxon>
        <taxon>Pseudomonadati</taxon>
        <taxon>Pseudomonadota</taxon>
        <taxon>Betaproteobacteria</taxon>
        <taxon>Burkholderiales</taxon>
        <taxon>Burkholderiaceae</taxon>
        <taxon>Paraburkholderia</taxon>
    </lineage>
</organism>
<name>FTSH_PARP8</name>
<accession>B2JVU2</accession>
<geneLocation type="plasmid">
    <name>pBPHY01</name>
</geneLocation>
<dbReference type="EC" id="3.4.24.-" evidence="1"/>
<dbReference type="EMBL" id="CP001045">
    <property type="protein sequence ID" value="ACC75069.1"/>
    <property type="molecule type" value="Genomic_DNA"/>
</dbReference>
<dbReference type="RefSeq" id="WP_012405229.1">
    <property type="nucleotide sequence ID" value="NC_010625.1"/>
</dbReference>
<dbReference type="SMR" id="B2JVU2"/>
<dbReference type="KEGG" id="bph:Bphy_6007"/>
<dbReference type="HOGENOM" id="CLU_000688_16_2_4"/>
<dbReference type="OrthoDB" id="9809379at2"/>
<dbReference type="Proteomes" id="UP000001192">
    <property type="component" value="Plasmid pBPHY01"/>
</dbReference>
<dbReference type="GO" id="GO:0005886">
    <property type="term" value="C:plasma membrane"/>
    <property type="evidence" value="ECO:0007669"/>
    <property type="project" value="UniProtKB-SubCell"/>
</dbReference>
<dbReference type="GO" id="GO:0005524">
    <property type="term" value="F:ATP binding"/>
    <property type="evidence" value="ECO:0007669"/>
    <property type="project" value="UniProtKB-UniRule"/>
</dbReference>
<dbReference type="GO" id="GO:0016887">
    <property type="term" value="F:ATP hydrolysis activity"/>
    <property type="evidence" value="ECO:0007669"/>
    <property type="project" value="UniProtKB-UniRule"/>
</dbReference>
<dbReference type="GO" id="GO:0004176">
    <property type="term" value="F:ATP-dependent peptidase activity"/>
    <property type="evidence" value="ECO:0007669"/>
    <property type="project" value="InterPro"/>
</dbReference>
<dbReference type="GO" id="GO:0004222">
    <property type="term" value="F:metalloendopeptidase activity"/>
    <property type="evidence" value="ECO:0007669"/>
    <property type="project" value="InterPro"/>
</dbReference>
<dbReference type="GO" id="GO:0008270">
    <property type="term" value="F:zinc ion binding"/>
    <property type="evidence" value="ECO:0007669"/>
    <property type="project" value="UniProtKB-UniRule"/>
</dbReference>
<dbReference type="GO" id="GO:0030163">
    <property type="term" value="P:protein catabolic process"/>
    <property type="evidence" value="ECO:0007669"/>
    <property type="project" value="UniProtKB-UniRule"/>
</dbReference>
<dbReference type="GO" id="GO:0006508">
    <property type="term" value="P:proteolysis"/>
    <property type="evidence" value="ECO:0007669"/>
    <property type="project" value="UniProtKB-KW"/>
</dbReference>
<dbReference type="CDD" id="cd19501">
    <property type="entry name" value="RecA-like_FtsH"/>
    <property type="match status" value="1"/>
</dbReference>
<dbReference type="FunFam" id="1.10.8.60:FF:000001">
    <property type="entry name" value="ATP-dependent zinc metalloprotease FtsH"/>
    <property type="match status" value="1"/>
</dbReference>
<dbReference type="FunFam" id="1.20.58.760:FF:000001">
    <property type="entry name" value="ATP-dependent zinc metalloprotease FtsH"/>
    <property type="match status" value="1"/>
</dbReference>
<dbReference type="FunFam" id="3.40.50.300:FF:000001">
    <property type="entry name" value="ATP-dependent zinc metalloprotease FtsH"/>
    <property type="match status" value="1"/>
</dbReference>
<dbReference type="Gene3D" id="1.10.8.60">
    <property type="match status" value="1"/>
</dbReference>
<dbReference type="Gene3D" id="3.30.720.210">
    <property type="match status" value="1"/>
</dbReference>
<dbReference type="Gene3D" id="3.40.50.300">
    <property type="entry name" value="P-loop containing nucleotide triphosphate hydrolases"/>
    <property type="match status" value="1"/>
</dbReference>
<dbReference type="Gene3D" id="1.20.58.760">
    <property type="entry name" value="Peptidase M41"/>
    <property type="match status" value="1"/>
</dbReference>
<dbReference type="HAMAP" id="MF_01458">
    <property type="entry name" value="FtsH"/>
    <property type="match status" value="1"/>
</dbReference>
<dbReference type="InterPro" id="IPR003593">
    <property type="entry name" value="AAA+_ATPase"/>
</dbReference>
<dbReference type="InterPro" id="IPR041569">
    <property type="entry name" value="AAA_lid_3"/>
</dbReference>
<dbReference type="InterPro" id="IPR003959">
    <property type="entry name" value="ATPase_AAA_core"/>
</dbReference>
<dbReference type="InterPro" id="IPR003960">
    <property type="entry name" value="ATPase_AAA_CS"/>
</dbReference>
<dbReference type="InterPro" id="IPR005936">
    <property type="entry name" value="FtsH"/>
</dbReference>
<dbReference type="InterPro" id="IPR027417">
    <property type="entry name" value="P-loop_NTPase"/>
</dbReference>
<dbReference type="InterPro" id="IPR011546">
    <property type="entry name" value="Pept_M41_FtsH_extracell"/>
</dbReference>
<dbReference type="InterPro" id="IPR000642">
    <property type="entry name" value="Peptidase_M41"/>
</dbReference>
<dbReference type="InterPro" id="IPR037219">
    <property type="entry name" value="Peptidase_M41-like"/>
</dbReference>
<dbReference type="NCBIfam" id="TIGR01241">
    <property type="entry name" value="FtsH_fam"/>
    <property type="match status" value="1"/>
</dbReference>
<dbReference type="PANTHER" id="PTHR23076:SF113">
    <property type="entry name" value="ATP-DEPENDENT ZINC METALLOPROTEASE FTSH 1, CHLOROPLASTIC-RELATED"/>
    <property type="match status" value="1"/>
</dbReference>
<dbReference type="PANTHER" id="PTHR23076">
    <property type="entry name" value="METALLOPROTEASE M41 FTSH"/>
    <property type="match status" value="1"/>
</dbReference>
<dbReference type="Pfam" id="PF00004">
    <property type="entry name" value="AAA"/>
    <property type="match status" value="1"/>
</dbReference>
<dbReference type="Pfam" id="PF17862">
    <property type="entry name" value="AAA_lid_3"/>
    <property type="match status" value="1"/>
</dbReference>
<dbReference type="Pfam" id="PF06480">
    <property type="entry name" value="FtsH_ext"/>
    <property type="match status" value="1"/>
</dbReference>
<dbReference type="Pfam" id="PF01434">
    <property type="entry name" value="Peptidase_M41"/>
    <property type="match status" value="1"/>
</dbReference>
<dbReference type="SMART" id="SM00382">
    <property type="entry name" value="AAA"/>
    <property type="match status" value="1"/>
</dbReference>
<dbReference type="SUPFAM" id="SSF140990">
    <property type="entry name" value="FtsH protease domain-like"/>
    <property type="match status" value="1"/>
</dbReference>
<dbReference type="SUPFAM" id="SSF52540">
    <property type="entry name" value="P-loop containing nucleoside triphosphate hydrolases"/>
    <property type="match status" value="1"/>
</dbReference>
<dbReference type="PROSITE" id="PS00674">
    <property type="entry name" value="AAA"/>
    <property type="match status" value="1"/>
</dbReference>
<protein>
    <recommendedName>
        <fullName evidence="1">ATP-dependent zinc metalloprotease FtsH</fullName>
        <ecNumber evidence="1">3.4.24.-</ecNumber>
    </recommendedName>
</protein>
<reference key="1">
    <citation type="journal article" date="2014" name="Stand. Genomic Sci.">
        <title>Complete genome sequence of Burkholderia phymatum STM815(T), a broad host range and efficient nitrogen-fixing symbiont of Mimosa species.</title>
        <authorList>
            <person name="Moulin L."/>
            <person name="Klonowska A."/>
            <person name="Caroline B."/>
            <person name="Booth K."/>
            <person name="Vriezen J.A."/>
            <person name="Melkonian R."/>
            <person name="James E.K."/>
            <person name="Young J.P."/>
            <person name="Bena G."/>
            <person name="Hauser L."/>
            <person name="Land M."/>
            <person name="Kyrpides N."/>
            <person name="Bruce D."/>
            <person name="Chain P."/>
            <person name="Copeland A."/>
            <person name="Pitluck S."/>
            <person name="Woyke T."/>
            <person name="Lizotte-Waniewski M."/>
            <person name="Bristow J."/>
            <person name="Riley M."/>
        </authorList>
    </citation>
    <scope>NUCLEOTIDE SEQUENCE [LARGE SCALE GENOMIC DNA]</scope>
    <source>
        <strain>DSM 17167 / CIP 108236 / LMG 21445 / STM815</strain>
    </source>
</reference>
<gene>
    <name evidence="1" type="primary">ftsH</name>
    <name type="ordered locus">Bphy_6007</name>
</gene>
<proteinExistence type="inferred from homology"/>
<keyword id="KW-0067">ATP-binding</keyword>
<keyword id="KW-0997">Cell inner membrane</keyword>
<keyword id="KW-1003">Cell membrane</keyword>
<keyword id="KW-0378">Hydrolase</keyword>
<keyword id="KW-0472">Membrane</keyword>
<keyword id="KW-0479">Metal-binding</keyword>
<keyword id="KW-0482">Metalloprotease</keyword>
<keyword id="KW-0547">Nucleotide-binding</keyword>
<keyword id="KW-0614">Plasmid</keyword>
<keyword id="KW-0645">Protease</keyword>
<keyword id="KW-1185">Reference proteome</keyword>
<keyword id="KW-0812">Transmembrane</keyword>
<keyword id="KW-1133">Transmembrane helix</keyword>
<keyword id="KW-0862">Zinc</keyword>